<comment type="function">
    <text evidence="1">Catalyzes the attachment of serine to tRNA(Ser). Is also able to aminoacylate tRNA(Sec) with serine, to form the misacylated tRNA L-seryl-tRNA(Sec), which will be further converted into selenocysteinyl-tRNA(Sec).</text>
</comment>
<comment type="catalytic activity">
    <reaction evidence="1">
        <text>tRNA(Ser) + L-serine + ATP = L-seryl-tRNA(Ser) + AMP + diphosphate + H(+)</text>
        <dbReference type="Rhea" id="RHEA:12292"/>
        <dbReference type="Rhea" id="RHEA-COMP:9669"/>
        <dbReference type="Rhea" id="RHEA-COMP:9703"/>
        <dbReference type="ChEBI" id="CHEBI:15378"/>
        <dbReference type="ChEBI" id="CHEBI:30616"/>
        <dbReference type="ChEBI" id="CHEBI:33019"/>
        <dbReference type="ChEBI" id="CHEBI:33384"/>
        <dbReference type="ChEBI" id="CHEBI:78442"/>
        <dbReference type="ChEBI" id="CHEBI:78533"/>
        <dbReference type="ChEBI" id="CHEBI:456215"/>
        <dbReference type="EC" id="6.1.1.11"/>
    </reaction>
</comment>
<comment type="catalytic activity">
    <reaction evidence="1">
        <text>tRNA(Sec) + L-serine + ATP = L-seryl-tRNA(Sec) + AMP + diphosphate + H(+)</text>
        <dbReference type="Rhea" id="RHEA:42580"/>
        <dbReference type="Rhea" id="RHEA-COMP:9742"/>
        <dbReference type="Rhea" id="RHEA-COMP:10128"/>
        <dbReference type="ChEBI" id="CHEBI:15378"/>
        <dbReference type="ChEBI" id="CHEBI:30616"/>
        <dbReference type="ChEBI" id="CHEBI:33019"/>
        <dbReference type="ChEBI" id="CHEBI:33384"/>
        <dbReference type="ChEBI" id="CHEBI:78442"/>
        <dbReference type="ChEBI" id="CHEBI:78533"/>
        <dbReference type="ChEBI" id="CHEBI:456215"/>
        <dbReference type="EC" id="6.1.1.11"/>
    </reaction>
</comment>
<comment type="pathway">
    <text evidence="1">Aminoacyl-tRNA biosynthesis; selenocysteinyl-tRNA(Sec) biosynthesis; L-seryl-tRNA(Sec) from L-serine and tRNA(Sec): step 1/1.</text>
</comment>
<comment type="subunit">
    <text evidence="1">Homodimer. The tRNA molecule binds across the dimer.</text>
</comment>
<comment type="subcellular location">
    <subcellularLocation>
        <location evidence="1">Cytoplasm</location>
    </subcellularLocation>
</comment>
<comment type="domain">
    <text evidence="1">Consists of two distinct domains, a catalytic core and a N-terminal extension that is involved in tRNA binding.</text>
</comment>
<comment type="similarity">
    <text evidence="1">Belongs to the class-II aminoacyl-tRNA synthetase family. Type-1 seryl-tRNA synthetase subfamily.</text>
</comment>
<accession>C6DF54</accession>
<gene>
    <name evidence="1" type="primary">serS</name>
    <name type="ordered locus">PC1_1722</name>
</gene>
<evidence type="ECO:0000255" key="1">
    <source>
        <dbReference type="HAMAP-Rule" id="MF_00176"/>
    </source>
</evidence>
<proteinExistence type="inferred from homology"/>
<dbReference type="EC" id="6.1.1.11" evidence="1"/>
<dbReference type="EMBL" id="CP001657">
    <property type="protein sequence ID" value="ACT12763.1"/>
    <property type="molecule type" value="Genomic_DNA"/>
</dbReference>
<dbReference type="RefSeq" id="WP_015839975.1">
    <property type="nucleotide sequence ID" value="NC_012917.1"/>
</dbReference>
<dbReference type="SMR" id="C6DF54"/>
<dbReference type="STRING" id="561230.PC1_1722"/>
<dbReference type="KEGG" id="pct:PC1_1722"/>
<dbReference type="eggNOG" id="COG0172">
    <property type="taxonomic scope" value="Bacteria"/>
</dbReference>
<dbReference type="HOGENOM" id="CLU_023797_1_1_6"/>
<dbReference type="OrthoDB" id="9804647at2"/>
<dbReference type="UniPathway" id="UPA00906">
    <property type="reaction ID" value="UER00895"/>
</dbReference>
<dbReference type="Proteomes" id="UP000002736">
    <property type="component" value="Chromosome"/>
</dbReference>
<dbReference type="GO" id="GO:0005737">
    <property type="term" value="C:cytoplasm"/>
    <property type="evidence" value="ECO:0007669"/>
    <property type="project" value="UniProtKB-SubCell"/>
</dbReference>
<dbReference type="GO" id="GO:0005524">
    <property type="term" value="F:ATP binding"/>
    <property type="evidence" value="ECO:0007669"/>
    <property type="project" value="UniProtKB-UniRule"/>
</dbReference>
<dbReference type="GO" id="GO:0004828">
    <property type="term" value="F:serine-tRNA ligase activity"/>
    <property type="evidence" value="ECO:0007669"/>
    <property type="project" value="UniProtKB-UniRule"/>
</dbReference>
<dbReference type="GO" id="GO:0016260">
    <property type="term" value="P:selenocysteine biosynthetic process"/>
    <property type="evidence" value="ECO:0007669"/>
    <property type="project" value="UniProtKB-UniRule"/>
</dbReference>
<dbReference type="GO" id="GO:0006434">
    <property type="term" value="P:seryl-tRNA aminoacylation"/>
    <property type="evidence" value="ECO:0007669"/>
    <property type="project" value="UniProtKB-UniRule"/>
</dbReference>
<dbReference type="CDD" id="cd00770">
    <property type="entry name" value="SerRS_core"/>
    <property type="match status" value="1"/>
</dbReference>
<dbReference type="FunFam" id="1.10.287.40:FF:000001">
    <property type="entry name" value="Serine--tRNA ligase"/>
    <property type="match status" value="1"/>
</dbReference>
<dbReference type="FunFam" id="3.30.930.10:FF:000018">
    <property type="entry name" value="Serine--tRNA ligase"/>
    <property type="match status" value="1"/>
</dbReference>
<dbReference type="Gene3D" id="3.30.930.10">
    <property type="entry name" value="Bira Bifunctional Protein, Domain 2"/>
    <property type="match status" value="1"/>
</dbReference>
<dbReference type="Gene3D" id="1.10.287.40">
    <property type="entry name" value="Serine-tRNA synthetase, tRNA binding domain"/>
    <property type="match status" value="1"/>
</dbReference>
<dbReference type="HAMAP" id="MF_00176">
    <property type="entry name" value="Ser_tRNA_synth_type1"/>
    <property type="match status" value="1"/>
</dbReference>
<dbReference type="InterPro" id="IPR002314">
    <property type="entry name" value="aa-tRNA-synt_IIb"/>
</dbReference>
<dbReference type="InterPro" id="IPR006195">
    <property type="entry name" value="aa-tRNA-synth_II"/>
</dbReference>
<dbReference type="InterPro" id="IPR045864">
    <property type="entry name" value="aa-tRNA-synth_II/BPL/LPL"/>
</dbReference>
<dbReference type="InterPro" id="IPR002317">
    <property type="entry name" value="Ser-tRNA-ligase_type_1"/>
</dbReference>
<dbReference type="InterPro" id="IPR015866">
    <property type="entry name" value="Ser-tRNA-synth_1_N"/>
</dbReference>
<dbReference type="InterPro" id="IPR042103">
    <property type="entry name" value="SerRS_1_N_sf"/>
</dbReference>
<dbReference type="InterPro" id="IPR033729">
    <property type="entry name" value="SerRS_core"/>
</dbReference>
<dbReference type="InterPro" id="IPR010978">
    <property type="entry name" value="tRNA-bd_arm"/>
</dbReference>
<dbReference type="NCBIfam" id="TIGR00414">
    <property type="entry name" value="serS"/>
    <property type="match status" value="1"/>
</dbReference>
<dbReference type="PANTHER" id="PTHR43697:SF1">
    <property type="entry name" value="SERINE--TRNA LIGASE"/>
    <property type="match status" value="1"/>
</dbReference>
<dbReference type="PANTHER" id="PTHR43697">
    <property type="entry name" value="SERYL-TRNA SYNTHETASE"/>
    <property type="match status" value="1"/>
</dbReference>
<dbReference type="Pfam" id="PF02403">
    <property type="entry name" value="Seryl_tRNA_N"/>
    <property type="match status" value="1"/>
</dbReference>
<dbReference type="Pfam" id="PF00587">
    <property type="entry name" value="tRNA-synt_2b"/>
    <property type="match status" value="1"/>
</dbReference>
<dbReference type="PIRSF" id="PIRSF001529">
    <property type="entry name" value="Ser-tRNA-synth_IIa"/>
    <property type="match status" value="1"/>
</dbReference>
<dbReference type="PRINTS" id="PR00981">
    <property type="entry name" value="TRNASYNTHSER"/>
</dbReference>
<dbReference type="SUPFAM" id="SSF55681">
    <property type="entry name" value="Class II aaRS and biotin synthetases"/>
    <property type="match status" value="1"/>
</dbReference>
<dbReference type="SUPFAM" id="SSF46589">
    <property type="entry name" value="tRNA-binding arm"/>
    <property type="match status" value="1"/>
</dbReference>
<dbReference type="PROSITE" id="PS50862">
    <property type="entry name" value="AA_TRNA_LIGASE_II"/>
    <property type="match status" value="1"/>
</dbReference>
<name>SYS_PECCP</name>
<feature type="chain" id="PRO_1000203764" description="Serine--tRNA ligase">
    <location>
        <begin position="1"/>
        <end position="431"/>
    </location>
</feature>
<feature type="binding site" evidence="1">
    <location>
        <begin position="238"/>
        <end position="240"/>
    </location>
    <ligand>
        <name>L-serine</name>
        <dbReference type="ChEBI" id="CHEBI:33384"/>
    </ligand>
</feature>
<feature type="binding site" evidence="1">
    <location>
        <begin position="269"/>
        <end position="271"/>
    </location>
    <ligand>
        <name>ATP</name>
        <dbReference type="ChEBI" id="CHEBI:30616"/>
    </ligand>
</feature>
<feature type="binding site" evidence="1">
    <location>
        <position position="292"/>
    </location>
    <ligand>
        <name>L-serine</name>
        <dbReference type="ChEBI" id="CHEBI:33384"/>
    </ligand>
</feature>
<feature type="binding site" evidence="1">
    <location>
        <begin position="356"/>
        <end position="359"/>
    </location>
    <ligand>
        <name>ATP</name>
        <dbReference type="ChEBI" id="CHEBI:30616"/>
    </ligand>
</feature>
<feature type="binding site" evidence="1">
    <location>
        <position position="392"/>
    </location>
    <ligand>
        <name>L-serine</name>
        <dbReference type="ChEBI" id="CHEBI:33384"/>
    </ligand>
</feature>
<protein>
    <recommendedName>
        <fullName evidence="1">Serine--tRNA ligase</fullName>
        <ecNumber evidence="1">6.1.1.11</ecNumber>
    </recommendedName>
    <alternativeName>
        <fullName evidence="1">Seryl-tRNA synthetase</fullName>
        <shortName evidence="1">SerRS</shortName>
    </alternativeName>
    <alternativeName>
        <fullName evidence="1">Seryl-tRNA(Ser/Sec) synthetase</fullName>
    </alternativeName>
</protein>
<sequence length="431" mass="48844">MLDPNLLRNELDAVAEKLLARRGFKLDVETLRKQEERRKVLQVETENLQAERNSRSKEIGAAKARGEDIEPLRREVNTLGEKLDAAKAELDQLQNEIRDLALTIPNLPDDSVPLGKDDTQNQEVTRWGEPRKYDFPVRDHVELGEMAAGLDFAAAVKLTGARFVVMKGQIARLHRALSQFMLDLHTQQHAYQEAYVPYLVNHATLYGTGQLPKFGEDLFHTNPLSEEAESSQYALIPTAEVPLTNLVRDEILDEESLPLKMTAHTPCFRSEAGSYGRDTRGLIRMHQFDKVELVQIVRPEDSMQALEELTTHAETVLQLLKLPYRKVLLCTGDMGFGSTKTYDLEVWLPAQDTYREISSCSNMWDFQARRMQARCRSKSDKKTRLVHTLNGSGLAVGRTLVAVLENYQQADGRIEIPEVLRPYMGGLEFIG</sequence>
<reference key="1">
    <citation type="submission" date="2009-07" db="EMBL/GenBank/DDBJ databases">
        <title>Complete sequence of Pectobacterium carotovorum subsp. carotovorum PC1.</title>
        <authorList>
            <consortium name="US DOE Joint Genome Institute"/>
            <person name="Lucas S."/>
            <person name="Copeland A."/>
            <person name="Lapidus A."/>
            <person name="Glavina del Rio T."/>
            <person name="Tice H."/>
            <person name="Bruce D."/>
            <person name="Goodwin L."/>
            <person name="Pitluck S."/>
            <person name="Munk A.C."/>
            <person name="Brettin T."/>
            <person name="Detter J.C."/>
            <person name="Han C."/>
            <person name="Tapia R."/>
            <person name="Larimer F."/>
            <person name="Land M."/>
            <person name="Hauser L."/>
            <person name="Kyrpides N."/>
            <person name="Mikhailova N."/>
            <person name="Balakrishnan V."/>
            <person name="Glasner J."/>
            <person name="Perna N.T."/>
        </authorList>
    </citation>
    <scope>NUCLEOTIDE SEQUENCE [LARGE SCALE GENOMIC DNA]</scope>
    <source>
        <strain>PC1</strain>
    </source>
</reference>
<keyword id="KW-0030">Aminoacyl-tRNA synthetase</keyword>
<keyword id="KW-0067">ATP-binding</keyword>
<keyword id="KW-0963">Cytoplasm</keyword>
<keyword id="KW-0436">Ligase</keyword>
<keyword id="KW-0547">Nucleotide-binding</keyword>
<keyword id="KW-0648">Protein biosynthesis</keyword>
<organism>
    <name type="scientific">Pectobacterium carotovorum subsp. carotovorum (strain PC1)</name>
    <dbReference type="NCBI Taxonomy" id="561230"/>
    <lineage>
        <taxon>Bacteria</taxon>
        <taxon>Pseudomonadati</taxon>
        <taxon>Pseudomonadota</taxon>
        <taxon>Gammaproteobacteria</taxon>
        <taxon>Enterobacterales</taxon>
        <taxon>Pectobacteriaceae</taxon>
        <taxon>Pectobacterium</taxon>
    </lineage>
</organism>